<organism>
    <name type="scientific">Frankia casuarinae (strain DSM 45818 / CECT 9043 / HFP020203 / CcI3)</name>
    <dbReference type="NCBI Taxonomy" id="106370"/>
    <lineage>
        <taxon>Bacteria</taxon>
        <taxon>Bacillati</taxon>
        <taxon>Actinomycetota</taxon>
        <taxon>Actinomycetes</taxon>
        <taxon>Frankiales</taxon>
        <taxon>Frankiaceae</taxon>
        <taxon>Frankia</taxon>
    </lineage>
</organism>
<proteinExistence type="inferred from homology"/>
<keyword id="KW-0131">Cell cycle</keyword>
<keyword id="KW-0132">Cell division</keyword>
<keyword id="KW-1003">Cell membrane</keyword>
<keyword id="KW-0133">Cell shape</keyword>
<keyword id="KW-0961">Cell wall biogenesis/degradation</keyword>
<keyword id="KW-0460">Magnesium</keyword>
<keyword id="KW-0472">Membrane</keyword>
<keyword id="KW-0479">Metal-binding</keyword>
<keyword id="KW-0573">Peptidoglycan synthesis</keyword>
<keyword id="KW-1185">Reference proteome</keyword>
<keyword id="KW-0808">Transferase</keyword>
<keyword id="KW-0812">Transmembrane</keyword>
<keyword id="KW-1133">Transmembrane helix</keyword>
<protein>
    <recommendedName>
        <fullName evidence="1">Phospho-N-acetylmuramoyl-pentapeptide-transferase</fullName>
        <ecNumber evidence="1">2.7.8.13</ecNumber>
    </recommendedName>
    <alternativeName>
        <fullName evidence="1">UDP-MurNAc-pentapeptide phosphotransferase</fullName>
    </alternativeName>
</protein>
<sequence length="355" mass="37707">MRGVLIAAMVALVVSLLGTPWVIRLFRRQGYGQEIREDGPSSHLTKRGTPTMGGTVIIVAALAGYFLAHLVTGIGFTASGLLVLMVMTGLGLVGFLDDYIKIRKQRSLGLTARMKFTGQAAVAIVFGLLAVRFKNDAGLLPGSTYISIVRDTSLSVGIIAFPLLAWIIIAATSNAVNLTDGLDGLAAGTSAMVFGAYVIISFWQFGNLCEPHAAEAGCYLVRDPLDVALVAAAAMGACFGFLWWNASPAKIFMGDTGSLALGGAFASIAIVSRTELLLVVLGGLFVIETLSVMIQVAFFKATKKRVFNMAPIHHHFELAEWPETTVIIRFWIVSGLAVAFGLGLFYAEFLSHGGG</sequence>
<feature type="chain" id="PRO_1000002975" description="Phospho-N-acetylmuramoyl-pentapeptide-transferase">
    <location>
        <begin position="1"/>
        <end position="355"/>
    </location>
</feature>
<feature type="transmembrane region" description="Helical" evidence="1">
    <location>
        <begin position="3"/>
        <end position="23"/>
    </location>
</feature>
<feature type="transmembrane region" description="Helical" evidence="1">
    <location>
        <begin position="56"/>
        <end position="76"/>
    </location>
</feature>
<feature type="transmembrane region" description="Helical" evidence="1">
    <location>
        <begin position="80"/>
        <end position="100"/>
    </location>
</feature>
<feature type="transmembrane region" description="Helical" evidence="1">
    <location>
        <begin position="120"/>
        <end position="140"/>
    </location>
</feature>
<feature type="transmembrane region" description="Helical" evidence="1">
    <location>
        <begin position="156"/>
        <end position="176"/>
    </location>
</feature>
<feature type="transmembrane region" description="Helical" evidence="1">
    <location>
        <begin position="185"/>
        <end position="205"/>
    </location>
</feature>
<feature type="transmembrane region" description="Helical" evidence="1">
    <location>
        <begin position="224"/>
        <end position="244"/>
    </location>
</feature>
<feature type="transmembrane region" description="Helical" evidence="1">
    <location>
        <begin position="251"/>
        <end position="271"/>
    </location>
</feature>
<feature type="transmembrane region" description="Helical" evidence="1">
    <location>
        <begin position="276"/>
        <end position="296"/>
    </location>
</feature>
<feature type="transmembrane region" description="Helical" evidence="1">
    <location>
        <begin position="330"/>
        <end position="350"/>
    </location>
</feature>
<dbReference type="EC" id="2.7.8.13" evidence="1"/>
<dbReference type="EMBL" id="CP000249">
    <property type="protein sequence ID" value="ABD10789.1"/>
    <property type="molecule type" value="Genomic_DNA"/>
</dbReference>
<dbReference type="RefSeq" id="WP_011435854.1">
    <property type="nucleotide sequence ID" value="NZ_LRTJ01000010.1"/>
</dbReference>
<dbReference type="SMR" id="Q2JD53"/>
<dbReference type="STRING" id="106370.Francci3_1412"/>
<dbReference type="KEGG" id="fra:Francci3_1412"/>
<dbReference type="eggNOG" id="COG0472">
    <property type="taxonomic scope" value="Bacteria"/>
</dbReference>
<dbReference type="HOGENOM" id="CLU_023982_0_1_11"/>
<dbReference type="OrthoDB" id="9805475at2"/>
<dbReference type="PhylomeDB" id="Q2JD53"/>
<dbReference type="UniPathway" id="UPA00219"/>
<dbReference type="Proteomes" id="UP000001937">
    <property type="component" value="Chromosome"/>
</dbReference>
<dbReference type="GO" id="GO:0005886">
    <property type="term" value="C:plasma membrane"/>
    <property type="evidence" value="ECO:0007669"/>
    <property type="project" value="UniProtKB-SubCell"/>
</dbReference>
<dbReference type="GO" id="GO:0046872">
    <property type="term" value="F:metal ion binding"/>
    <property type="evidence" value="ECO:0007669"/>
    <property type="project" value="UniProtKB-KW"/>
</dbReference>
<dbReference type="GO" id="GO:0008963">
    <property type="term" value="F:phospho-N-acetylmuramoyl-pentapeptide-transferase activity"/>
    <property type="evidence" value="ECO:0007669"/>
    <property type="project" value="UniProtKB-UniRule"/>
</dbReference>
<dbReference type="GO" id="GO:0051992">
    <property type="term" value="F:UDP-N-acetylmuramoyl-L-alanyl-D-glutamyl-meso-2,6-diaminopimelyl-D-alanyl-D-alanine:undecaprenyl-phosphate transferase activity"/>
    <property type="evidence" value="ECO:0007669"/>
    <property type="project" value="RHEA"/>
</dbReference>
<dbReference type="GO" id="GO:0051301">
    <property type="term" value="P:cell division"/>
    <property type="evidence" value="ECO:0007669"/>
    <property type="project" value="UniProtKB-KW"/>
</dbReference>
<dbReference type="GO" id="GO:0071555">
    <property type="term" value="P:cell wall organization"/>
    <property type="evidence" value="ECO:0007669"/>
    <property type="project" value="UniProtKB-KW"/>
</dbReference>
<dbReference type="GO" id="GO:0009252">
    <property type="term" value="P:peptidoglycan biosynthetic process"/>
    <property type="evidence" value="ECO:0007669"/>
    <property type="project" value="UniProtKB-UniRule"/>
</dbReference>
<dbReference type="GO" id="GO:0008360">
    <property type="term" value="P:regulation of cell shape"/>
    <property type="evidence" value="ECO:0007669"/>
    <property type="project" value="UniProtKB-KW"/>
</dbReference>
<dbReference type="CDD" id="cd06852">
    <property type="entry name" value="GT_MraY"/>
    <property type="match status" value="1"/>
</dbReference>
<dbReference type="HAMAP" id="MF_00038">
    <property type="entry name" value="MraY"/>
    <property type="match status" value="1"/>
</dbReference>
<dbReference type="InterPro" id="IPR000715">
    <property type="entry name" value="Glycosyl_transferase_4"/>
</dbReference>
<dbReference type="InterPro" id="IPR003524">
    <property type="entry name" value="PNAcMuramoyl-5peptid_Trfase"/>
</dbReference>
<dbReference type="InterPro" id="IPR018480">
    <property type="entry name" value="PNAcMuramoyl-5peptid_Trfase_CS"/>
</dbReference>
<dbReference type="NCBIfam" id="TIGR00445">
    <property type="entry name" value="mraY"/>
    <property type="match status" value="1"/>
</dbReference>
<dbReference type="PANTHER" id="PTHR22926">
    <property type="entry name" value="PHOSPHO-N-ACETYLMURAMOYL-PENTAPEPTIDE-TRANSFERASE"/>
    <property type="match status" value="1"/>
</dbReference>
<dbReference type="PANTHER" id="PTHR22926:SF5">
    <property type="entry name" value="PHOSPHO-N-ACETYLMURAMOYL-PENTAPEPTIDE-TRANSFERASE HOMOLOG"/>
    <property type="match status" value="1"/>
</dbReference>
<dbReference type="Pfam" id="PF00953">
    <property type="entry name" value="Glycos_transf_4"/>
    <property type="match status" value="1"/>
</dbReference>
<dbReference type="Pfam" id="PF10555">
    <property type="entry name" value="MraY_sig1"/>
    <property type="match status" value="1"/>
</dbReference>
<dbReference type="PROSITE" id="PS01348">
    <property type="entry name" value="MRAY_2"/>
    <property type="match status" value="1"/>
</dbReference>
<accession>Q2JD53</accession>
<reference key="1">
    <citation type="journal article" date="2007" name="Genome Res.">
        <title>Genome characteristics of facultatively symbiotic Frankia sp. strains reflect host range and host plant biogeography.</title>
        <authorList>
            <person name="Normand P."/>
            <person name="Lapierre P."/>
            <person name="Tisa L.S."/>
            <person name="Gogarten J.P."/>
            <person name="Alloisio N."/>
            <person name="Bagnarol E."/>
            <person name="Bassi C.A."/>
            <person name="Berry A.M."/>
            <person name="Bickhart D.M."/>
            <person name="Choisne N."/>
            <person name="Couloux A."/>
            <person name="Cournoyer B."/>
            <person name="Cruveiller S."/>
            <person name="Daubin V."/>
            <person name="Demange N."/>
            <person name="Francino M.P."/>
            <person name="Goltsman E."/>
            <person name="Huang Y."/>
            <person name="Kopp O.R."/>
            <person name="Labarre L."/>
            <person name="Lapidus A."/>
            <person name="Lavire C."/>
            <person name="Marechal J."/>
            <person name="Martinez M."/>
            <person name="Mastronunzio J.E."/>
            <person name="Mullin B.C."/>
            <person name="Niemann J."/>
            <person name="Pujic P."/>
            <person name="Rawnsley T."/>
            <person name="Rouy Z."/>
            <person name="Schenowitz C."/>
            <person name="Sellstedt A."/>
            <person name="Tavares F."/>
            <person name="Tomkins J.P."/>
            <person name="Vallenet D."/>
            <person name="Valverde C."/>
            <person name="Wall L.G."/>
            <person name="Wang Y."/>
            <person name="Medigue C."/>
            <person name="Benson D.R."/>
        </authorList>
    </citation>
    <scope>NUCLEOTIDE SEQUENCE [LARGE SCALE GENOMIC DNA]</scope>
    <source>
        <strain>DSM 45818 / CECT 9043 / HFP020203 / CcI3</strain>
    </source>
</reference>
<evidence type="ECO:0000255" key="1">
    <source>
        <dbReference type="HAMAP-Rule" id="MF_00038"/>
    </source>
</evidence>
<name>MRAY_FRACC</name>
<comment type="function">
    <text evidence="1">Catalyzes the initial step of the lipid cycle reactions in the biosynthesis of the cell wall peptidoglycan: transfers peptidoglycan precursor phospho-MurNAc-pentapeptide from UDP-MurNAc-pentapeptide onto the lipid carrier undecaprenyl phosphate, yielding undecaprenyl-pyrophosphoryl-MurNAc-pentapeptide, known as lipid I.</text>
</comment>
<comment type="catalytic activity">
    <reaction evidence="1">
        <text>UDP-N-acetyl-alpha-D-muramoyl-L-alanyl-gamma-D-glutamyl-meso-2,6-diaminopimeloyl-D-alanyl-D-alanine + di-trans,octa-cis-undecaprenyl phosphate = di-trans,octa-cis-undecaprenyl diphospho-N-acetyl-alpha-D-muramoyl-L-alanyl-D-glutamyl-meso-2,6-diaminopimeloyl-D-alanyl-D-alanine + UMP</text>
        <dbReference type="Rhea" id="RHEA:28386"/>
        <dbReference type="ChEBI" id="CHEBI:57865"/>
        <dbReference type="ChEBI" id="CHEBI:60392"/>
        <dbReference type="ChEBI" id="CHEBI:61386"/>
        <dbReference type="ChEBI" id="CHEBI:61387"/>
        <dbReference type="EC" id="2.7.8.13"/>
    </reaction>
</comment>
<comment type="cofactor">
    <cofactor evidence="1">
        <name>Mg(2+)</name>
        <dbReference type="ChEBI" id="CHEBI:18420"/>
    </cofactor>
</comment>
<comment type="pathway">
    <text evidence="1">Cell wall biogenesis; peptidoglycan biosynthesis.</text>
</comment>
<comment type="subcellular location">
    <subcellularLocation>
        <location evidence="1">Cell membrane</location>
        <topology evidence="1">Multi-pass membrane protein</topology>
    </subcellularLocation>
</comment>
<comment type="similarity">
    <text evidence="1">Belongs to the glycosyltransferase 4 family. MraY subfamily.</text>
</comment>
<gene>
    <name evidence="1" type="primary">mraY</name>
    <name type="ordered locus">Francci3_1412</name>
</gene>